<comment type="function">
    <text>Tubulin is the major constituent of microtubules, a cylinder consisting of laterally associated linear protofilaments composed of alpha- and beta-tubulin heterodimers. Microtubules grow by the addition of GTP-tubulin dimers to the microtubule end, where a stabilizing cap forms. Below the cap, tubulin dimers are in GDP-bound state, owing to GTPase activity of alpha-tubulin.</text>
</comment>
<comment type="cofactor">
    <cofactor evidence="1">
        <name>Mg(2+)</name>
        <dbReference type="ChEBI" id="CHEBI:18420"/>
    </cofactor>
</comment>
<comment type="subunit">
    <text>Dimer of alpha and beta chains. A typical microtubule is a hollow water-filled tube with an outer diameter of 25 nm and an inner diameter of 15 nM. Alpha-beta heterodimers associate head-to-tail to form protofilaments running lengthwise along the microtubule wall with the beta-tubulin subunit facing the microtubule plus end conferring a structural polarity. Microtubules usually have 13 protofilaments but different protofilament numbers can be found in some organisms and specialized cells.</text>
</comment>
<comment type="subcellular location">
    <subcellularLocation>
        <location>Cytoplasm</location>
        <location>Cytoskeleton</location>
    </subcellularLocation>
</comment>
<comment type="similarity">
    <text evidence="5">Belongs to the tubulin family.</text>
</comment>
<gene>
    <name type="primary">tub-2</name>
    <name type="ORF">B2C22.060</name>
    <name type="ORF">NCU04054</name>
</gene>
<name>TBB_NEUCR</name>
<organism>
    <name type="scientific">Neurospora crassa (strain ATCC 24698 / 74-OR23-1A / CBS 708.71 / DSM 1257 / FGSC 987)</name>
    <dbReference type="NCBI Taxonomy" id="367110"/>
    <lineage>
        <taxon>Eukaryota</taxon>
        <taxon>Fungi</taxon>
        <taxon>Dikarya</taxon>
        <taxon>Ascomycota</taxon>
        <taxon>Pezizomycotina</taxon>
        <taxon>Sordariomycetes</taxon>
        <taxon>Sordariomycetidae</taxon>
        <taxon>Sordariales</taxon>
        <taxon>Sordariaceae</taxon>
        <taxon>Neurospora</taxon>
    </lineage>
</organism>
<keyword id="KW-0046">Antibiotic resistance</keyword>
<keyword id="KW-0963">Cytoplasm</keyword>
<keyword id="KW-0206">Cytoskeleton</keyword>
<keyword id="KW-0342">GTP-binding</keyword>
<keyword id="KW-0460">Magnesium</keyword>
<keyword id="KW-0479">Metal-binding</keyword>
<keyword id="KW-0493">Microtubule</keyword>
<keyword id="KW-0547">Nucleotide-binding</keyword>
<keyword id="KW-1185">Reference proteome</keyword>
<dbReference type="EMBL" id="M13630">
    <property type="protein sequence ID" value="AAA33617.1"/>
    <property type="molecule type" value="Genomic_DNA"/>
</dbReference>
<dbReference type="EMBL" id="BX897679">
    <property type="protein sequence ID" value="CAE85615.1"/>
    <property type="molecule type" value="Genomic_DNA"/>
</dbReference>
<dbReference type="EMBL" id="CM002241">
    <property type="protein sequence ID" value="EAA28433.2"/>
    <property type="molecule type" value="Genomic_DNA"/>
</dbReference>
<dbReference type="PIR" id="A25377">
    <property type="entry name" value="A25377"/>
</dbReference>
<dbReference type="RefSeq" id="XP_957669.2">
    <property type="nucleotide sequence ID" value="XM_952576.3"/>
</dbReference>
<dbReference type="SMR" id="P05220"/>
<dbReference type="FunCoup" id="P05220">
    <property type="interactions" value="1220"/>
</dbReference>
<dbReference type="STRING" id="367110.P05220"/>
<dbReference type="PaxDb" id="5141-EFNCRP00000003616"/>
<dbReference type="EnsemblFungi" id="EAA28433">
    <property type="protein sequence ID" value="EAA28433"/>
    <property type="gene ID" value="NCU04054"/>
</dbReference>
<dbReference type="GeneID" id="3873840"/>
<dbReference type="KEGG" id="ncr:NCU04054"/>
<dbReference type="VEuPathDB" id="FungiDB:NCU04054"/>
<dbReference type="HOGENOM" id="CLU_015718_1_1_1"/>
<dbReference type="InParanoid" id="P05220"/>
<dbReference type="OMA" id="WVPRSVN"/>
<dbReference type="OrthoDB" id="1662883at2759"/>
<dbReference type="Proteomes" id="UP000001805">
    <property type="component" value="Chromosome 5, Linkage Group VI"/>
</dbReference>
<dbReference type="GO" id="GO:0005737">
    <property type="term" value="C:cytoplasm"/>
    <property type="evidence" value="ECO:0000318"/>
    <property type="project" value="GO_Central"/>
</dbReference>
<dbReference type="GO" id="GO:0005874">
    <property type="term" value="C:microtubule"/>
    <property type="evidence" value="ECO:0000318"/>
    <property type="project" value="GO_Central"/>
</dbReference>
<dbReference type="GO" id="GO:0005525">
    <property type="term" value="F:GTP binding"/>
    <property type="evidence" value="ECO:0000318"/>
    <property type="project" value="GO_Central"/>
</dbReference>
<dbReference type="GO" id="GO:0003924">
    <property type="term" value="F:GTPase activity"/>
    <property type="evidence" value="ECO:0007669"/>
    <property type="project" value="InterPro"/>
</dbReference>
<dbReference type="GO" id="GO:0046872">
    <property type="term" value="F:metal ion binding"/>
    <property type="evidence" value="ECO:0007669"/>
    <property type="project" value="UniProtKB-KW"/>
</dbReference>
<dbReference type="GO" id="GO:0005200">
    <property type="term" value="F:structural constituent of cytoskeleton"/>
    <property type="evidence" value="ECO:0000318"/>
    <property type="project" value="GO_Central"/>
</dbReference>
<dbReference type="GO" id="GO:0000226">
    <property type="term" value="P:microtubule cytoskeleton organization"/>
    <property type="evidence" value="ECO:0000318"/>
    <property type="project" value="GO_Central"/>
</dbReference>
<dbReference type="GO" id="GO:0000278">
    <property type="term" value="P:mitotic cell cycle"/>
    <property type="evidence" value="ECO:0000318"/>
    <property type="project" value="GO_Central"/>
</dbReference>
<dbReference type="GO" id="GO:0046677">
    <property type="term" value="P:response to antibiotic"/>
    <property type="evidence" value="ECO:0007669"/>
    <property type="project" value="UniProtKB-KW"/>
</dbReference>
<dbReference type="CDD" id="cd02187">
    <property type="entry name" value="beta_tubulin"/>
    <property type="match status" value="1"/>
</dbReference>
<dbReference type="FunFam" id="1.10.287.600:FF:000003">
    <property type="entry name" value="Tubulin beta chain"/>
    <property type="match status" value="1"/>
</dbReference>
<dbReference type="FunFam" id="3.30.1330.20:FF:000002">
    <property type="entry name" value="Tubulin beta chain"/>
    <property type="match status" value="1"/>
</dbReference>
<dbReference type="FunFam" id="3.40.50.1440:FF:000009">
    <property type="entry name" value="Tubulin beta chain"/>
    <property type="match status" value="1"/>
</dbReference>
<dbReference type="Gene3D" id="1.10.287.600">
    <property type="entry name" value="Helix hairpin bin"/>
    <property type="match status" value="1"/>
</dbReference>
<dbReference type="Gene3D" id="3.30.1330.20">
    <property type="entry name" value="Tubulin/FtsZ, C-terminal domain"/>
    <property type="match status" value="1"/>
</dbReference>
<dbReference type="Gene3D" id="3.40.50.1440">
    <property type="entry name" value="Tubulin/FtsZ, GTPase domain"/>
    <property type="match status" value="1"/>
</dbReference>
<dbReference type="InterPro" id="IPR013838">
    <property type="entry name" value="Beta-tubulin_BS"/>
</dbReference>
<dbReference type="InterPro" id="IPR002453">
    <property type="entry name" value="Beta_tubulin"/>
</dbReference>
<dbReference type="InterPro" id="IPR008280">
    <property type="entry name" value="Tub_FtsZ_C"/>
</dbReference>
<dbReference type="InterPro" id="IPR000217">
    <property type="entry name" value="Tubulin"/>
</dbReference>
<dbReference type="InterPro" id="IPR037103">
    <property type="entry name" value="Tubulin/FtsZ-like_C"/>
</dbReference>
<dbReference type="InterPro" id="IPR018316">
    <property type="entry name" value="Tubulin/FtsZ_2-layer-sand-dom"/>
</dbReference>
<dbReference type="InterPro" id="IPR036525">
    <property type="entry name" value="Tubulin/FtsZ_GTPase_sf"/>
</dbReference>
<dbReference type="InterPro" id="IPR023123">
    <property type="entry name" value="Tubulin_C"/>
</dbReference>
<dbReference type="InterPro" id="IPR017975">
    <property type="entry name" value="Tubulin_CS"/>
</dbReference>
<dbReference type="InterPro" id="IPR003008">
    <property type="entry name" value="Tubulin_FtsZ_GTPase"/>
</dbReference>
<dbReference type="PANTHER" id="PTHR11588">
    <property type="entry name" value="TUBULIN"/>
    <property type="match status" value="1"/>
</dbReference>
<dbReference type="Pfam" id="PF00091">
    <property type="entry name" value="Tubulin"/>
    <property type="match status" value="1"/>
</dbReference>
<dbReference type="Pfam" id="PF03953">
    <property type="entry name" value="Tubulin_C"/>
    <property type="match status" value="1"/>
</dbReference>
<dbReference type="PRINTS" id="PR01163">
    <property type="entry name" value="BETATUBULIN"/>
</dbReference>
<dbReference type="PRINTS" id="PR01161">
    <property type="entry name" value="TUBULIN"/>
</dbReference>
<dbReference type="SMART" id="SM00864">
    <property type="entry name" value="Tubulin"/>
    <property type="match status" value="1"/>
</dbReference>
<dbReference type="SMART" id="SM00865">
    <property type="entry name" value="Tubulin_C"/>
    <property type="match status" value="1"/>
</dbReference>
<dbReference type="SUPFAM" id="SSF55307">
    <property type="entry name" value="Tubulin C-terminal domain-like"/>
    <property type="match status" value="1"/>
</dbReference>
<dbReference type="SUPFAM" id="SSF52490">
    <property type="entry name" value="Tubulin nucleotide-binding domain-like"/>
    <property type="match status" value="1"/>
</dbReference>
<dbReference type="PROSITE" id="PS00227">
    <property type="entry name" value="TUBULIN"/>
    <property type="match status" value="1"/>
</dbReference>
<dbReference type="PROSITE" id="PS00228">
    <property type="entry name" value="TUBULIN_B_AUTOREG"/>
    <property type="match status" value="1"/>
</dbReference>
<proteinExistence type="evidence at protein level"/>
<sequence>MREIVHLQTGQCGNQIGAAFWQTISGEHGLDASGVYNGTSELQLERMNVYFNEASGNKYVPRAVLVDLEPGTMDAVRAGPFGQLFRPDNFVFGQSGAGNNWAKGHYTEGAELVDQVLDVVRREAEGCDCLQGFQITHSLGGGTGAGMGTLLISKIREEFPDRMMATFSVVPSPKVSDTVVEPYNATLSVHQLVENSDETFCIDNEALYDICMRTLKLSNPSYGDLNHLVSAVMSGVTVSLRFPGQLNSDLRKLAVNMVPFPRLHFFMVGFAPLTSRGAHHFRAVSVPELTQQMFDPKNMMAASDFRNGRYLTCSAIFRGKVSMKEVEDQMRNVQNKNSSYFVEWIPNNVQTALCSIPPRGLKMSSTFVGNSTAIQELFKRIGEQFTAMFRRKAFLHWYTGEGMDEMEFTEAESNMNDLVSEYQQYQDAGVDEEEEEYEEEAPLEGEE</sequence>
<accession>P05220</accession>
<accession>Q6MFH4</accession>
<accession>Q7RV81</accession>
<protein>
    <recommendedName>
        <fullName>Tubulin beta chain</fullName>
    </recommendedName>
    <alternativeName>
        <fullName>Beta-tubulin</fullName>
    </alternativeName>
</protein>
<feature type="chain" id="PRO_0000048422" description="Tubulin beta chain">
    <location>
        <begin position="1"/>
        <end position="447"/>
    </location>
</feature>
<feature type="region of interest" description="Disordered" evidence="3">
    <location>
        <begin position="424"/>
        <end position="447"/>
    </location>
</feature>
<feature type="compositionally biased region" description="Acidic residues" evidence="3">
    <location>
        <begin position="429"/>
        <end position="447"/>
    </location>
</feature>
<feature type="binding site" evidence="2">
    <location>
        <position position="11"/>
    </location>
    <ligand>
        <name>GTP</name>
        <dbReference type="ChEBI" id="CHEBI:37565"/>
    </ligand>
</feature>
<feature type="binding site" evidence="1">
    <location>
        <position position="69"/>
    </location>
    <ligand>
        <name>GTP</name>
        <dbReference type="ChEBI" id="CHEBI:37565"/>
    </ligand>
</feature>
<feature type="binding site" evidence="1">
    <location>
        <position position="69"/>
    </location>
    <ligand>
        <name>Mg(2+)</name>
        <dbReference type="ChEBI" id="CHEBI:18420"/>
    </ligand>
</feature>
<feature type="binding site" evidence="2">
    <location>
        <position position="138"/>
    </location>
    <ligand>
        <name>GTP</name>
        <dbReference type="ChEBI" id="CHEBI:37565"/>
    </ligand>
</feature>
<feature type="binding site" evidence="2">
    <location>
        <position position="142"/>
    </location>
    <ligand>
        <name>GTP</name>
        <dbReference type="ChEBI" id="CHEBI:37565"/>
    </ligand>
</feature>
<feature type="binding site" evidence="2">
    <location>
        <position position="143"/>
    </location>
    <ligand>
        <name>GTP</name>
        <dbReference type="ChEBI" id="CHEBI:37565"/>
    </ligand>
</feature>
<feature type="binding site" evidence="2">
    <location>
        <position position="144"/>
    </location>
    <ligand>
        <name>GTP</name>
        <dbReference type="ChEBI" id="CHEBI:37565"/>
    </ligand>
</feature>
<feature type="binding site" evidence="2">
    <location>
        <position position="204"/>
    </location>
    <ligand>
        <name>GTP</name>
        <dbReference type="ChEBI" id="CHEBI:37565"/>
    </ligand>
</feature>
<feature type="binding site" evidence="2">
    <location>
        <position position="226"/>
    </location>
    <ligand>
        <name>GTP</name>
        <dbReference type="ChEBI" id="CHEBI:37565"/>
    </ligand>
</feature>
<feature type="mutagenesis site" description="Causes resistance to the fungicide benomyl." evidence="4">
    <original>F</original>
    <variation>Y</variation>
    <location>
        <position position="167"/>
    </location>
</feature>
<feature type="sequence conflict" description="In Ref. 1; EAA28433." evidence="5" ref="1">
    <original>R</original>
    <variation>K</variation>
    <location>
        <position position="390"/>
    </location>
</feature>
<evidence type="ECO:0000250" key="1">
    <source>
        <dbReference type="UniProtKB" id="P68363"/>
    </source>
</evidence>
<evidence type="ECO:0000250" key="2">
    <source>
        <dbReference type="UniProtKB" id="Q13509"/>
    </source>
</evidence>
<evidence type="ECO:0000256" key="3">
    <source>
        <dbReference type="SAM" id="MobiDB-lite"/>
    </source>
</evidence>
<evidence type="ECO:0000269" key="4">
    <source>
    </source>
</evidence>
<evidence type="ECO:0000305" key="5"/>
<reference key="1">
    <citation type="journal article" date="1986" name="Mol. Cell. Biol.">
        <title>Cloning and characterization of the gene for beta-tubulin from a benomyl-resistant mutant of Neurospora crassa and its use as a dominant selectable marker.</title>
        <authorList>
            <person name="Orbach M.J."/>
            <person name="Porro E.B."/>
            <person name="Yanofsky C."/>
        </authorList>
    </citation>
    <scope>NUCLEOTIDE SEQUENCE [GENOMIC DNA]</scope>
    <scope>MUTAGENESIS OF PHE-167</scope>
</reference>
<reference key="2">
    <citation type="journal article" date="2003" name="Nucleic Acids Res.">
        <title>What's in the genome of a filamentous fungus? Analysis of the Neurospora genome sequence.</title>
        <authorList>
            <person name="Mannhaupt G."/>
            <person name="Montrone C."/>
            <person name="Haase D."/>
            <person name="Mewes H.-W."/>
            <person name="Aign V."/>
            <person name="Hoheisel J.D."/>
            <person name="Fartmann B."/>
            <person name="Nyakatura G."/>
            <person name="Kempken F."/>
            <person name="Maier J."/>
            <person name="Schulte U."/>
        </authorList>
    </citation>
    <scope>NUCLEOTIDE SEQUENCE [LARGE SCALE GENOMIC DNA]</scope>
    <source>
        <strain>ATCC 24698 / 74-OR23-1A / CBS 708.71 / DSM 1257 / FGSC 987</strain>
    </source>
</reference>
<reference key="3">
    <citation type="journal article" date="2003" name="Nature">
        <title>The genome sequence of the filamentous fungus Neurospora crassa.</title>
        <authorList>
            <person name="Galagan J.E."/>
            <person name="Calvo S.E."/>
            <person name="Borkovich K.A."/>
            <person name="Selker E.U."/>
            <person name="Read N.D."/>
            <person name="Jaffe D.B."/>
            <person name="FitzHugh W."/>
            <person name="Ma L.-J."/>
            <person name="Smirnov S."/>
            <person name="Purcell S."/>
            <person name="Rehman B."/>
            <person name="Elkins T."/>
            <person name="Engels R."/>
            <person name="Wang S."/>
            <person name="Nielsen C.B."/>
            <person name="Butler J."/>
            <person name="Endrizzi M."/>
            <person name="Qui D."/>
            <person name="Ianakiev P."/>
            <person name="Bell-Pedersen D."/>
            <person name="Nelson M.A."/>
            <person name="Werner-Washburne M."/>
            <person name="Selitrennikoff C.P."/>
            <person name="Kinsey J.A."/>
            <person name="Braun E.L."/>
            <person name="Zelter A."/>
            <person name="Schulte U."/>
            <person name="Kothe G.O."/>
            <person name="Jedd G."/>
            <person name="Mewes H.-W."/>
            <person name="Staben C."/>
            <person name="Marcotte E."/>
            <person name="Greenberg D."/>
            <person name="Roy A."/>
            <person name="Foley K."/>
            <person name="Naylor J."/>
            <person name="Stange-Thomann N."/>
            <person name="Barrett R."/>
            <person name="Gnerre S."/>
            <person name="Kamal M."/>
            <person name="Kamvysselis M."/>
            <person name="Mauceli E.W."/>
            <person name="Bielke C."/>
            <person name="Rudd S."/>
            <person name="Frishman D."/>
            <person name="Krystofova S."/>
            <person name="Rasmussen C."/>
            <person name="Metzenberg R.L."/>
            <person name="Perkins D.D."/>
            <person name="Kroken S."/>
            <person name="Cogoni C."/>
            <person name="Macino G."/>
            <person name="Catcheside D.E.A."/>
            <person name="Li W."/>
            <person name="Pratt R.J."/>
            <person name="Osmani S.A."/>
            <person name="DeSouza C.P.C."/>
            <person name="Glass N.L."/>
            <person name="Orbach M.J."/>
            <person name="Berglund J.A."/>
            <person name="Voelker R."/>
            <person name="Yarden O."/>
            <person name="Plamann M."/>
            <person name="Seiler S."/>
            <person name="Dunlap J.C."/>
            <person name="Radford A."/>
            <person name="Aramayo R."/>
            <person name="Natvig D.O."/>
            <person name="Alex L.A."/>
            <person name="Mannhaupt G."/>
            <person name="Ebbole D.J."/>
            <person name="Freitag M."/>
            <person name="Paulsen I."/>
            <person name="Sachs M.S."/>
            <person name="Lander E.S."/>
            <person name="Nusbaum C."/>
            <person name="Birren B.W."/>
        </authorList>
    </citation>
    <scope>NUCLEOTIDE SEQUENCE [LARGE SCALE GENOMIC DNA]</scope>
    <source>
        <strain>ATCC 24698 / 74-OR23-1A / CBS 708.71 / DSM 1257 / FGSC 987</strain>
    </source>
</reference>